<gene>
    <name evidence="1" type="primary">folD</name>
    <name type="ordered locus">lpg1297</name>
</gene>
<comment type="function">
    <text evidence="1">Catalyzes the oxidation of 5,10-methylenetetrahydrofolate to 5,10-methenyltetrahydrofolate and then the hydrolysis of 5,10-methenyltetrahydrofolate to 10-formyltetrahydrofolate.</text>
</comment>
<comment type="catalytic activity">
    <reaction evidence="1">
        <text>(6R)-5,10-methylene-5,6,7,8-tetrahydrofolate + NADP(+) = (6R)-5,10-methenyltetrahydrofolate + NADPH</text>
        <dbReference type="Rhea" id="RHEA:22812"/>
        <dbReference type="ChEBI" id="CHEBI:15636"/>
        <dbReference type="ChEBI" id="CHEBI:57455"/>
        <dbReference type="ChEBI" id="CHEBI:57783"/>
        <dbReference type="ChEBI" id="CHEBI:58349"/>
        <dbReference type="EC" id="1.5.1.5"/>
    </reaction>
</comment>
<comment type="catalytic activity">
    <reaction evidence="1">
        <text>(6R)-5,10-methenyltetrahydrofolate + H2O = (6R)-10-formyltetrahydrofolate + H(+)</text>
        <dbReference type="Rhea" id="RHEA:23700"/>
        <dbReference type="ChEBI" id="CHEBI:15377"/>
        <dbReference type="ChEBI" id="CHEBI:15378"/>
        <dbReference type="ChEBI" id="CHEBI:57455"/>
        <dbReference type="ChEBI" id="CHEBI:195366"/>
        <dbReference type="EC" id="3.5.4.9"/>
    </reaction>
</comment>
<comment type="pathway">
    <text evidence="1">One-carbon metabolism; tetrahydrofolate interconversion.</text>
</comment>
<comment type="subunit">
    <text evidence="1">Homodimer.</text>
</comment>
<comment type="similarity">
    <text evidence="1">Belongs to the tetrahydrofolate dehydrogenase/cyclohydrolase family.</text>
</comment>
<dbReference type="EC" id="1.5.1.5" evidence="1"/>
<dbReference type="EC" id="3.5.4.9" evidence="1"/>
<dbReference type="EMBL" id="AE017354">
    <property type="protein sequence ID" value="AAU27380.1"/>
    <property type="molecule type" value="Genomic_DNA"/>
</dbReference>
<dbReference type="RefSeq" id="WP_010947028.1">
    <property type="nucleotide sequence ID" value="NC_002942.5"/>
</dbReference>
<dbReference type="RefSeq" id="YP_095327.1">
    <property type="nucleotide sequence ID" value="NC_002942.5"/>
</dbReference>
<dbReference type="SMR" id="Q5ZVZ1"/>
<dbReference type="STRING" id="272624.lpg1297"/>
<dbReference type="PaxDb" id="272624-lpg1297"/>
<dbReference type="GeneID" id="57035290"/>
<dbReference type="KEGG" id="lpn:lpg1297"/>
<dbReference type="PATRIC" id="fig|272624.6.peg.1367"/>
<dbReference type="eggNOG" id="COG0190">
    <property type="taxonomic scope" value="Bacteria"/>
</dbReference>
<dbReference type="HOGENOM" id="CLU_034045_2_1_6"/>
<dbReference type="OrthoDB" id="9803580at2"/>
<dbReference type="UniPathway" id="UPA00193"/>
<dbReference type="Proteomes" id="UP000000609">
    <property type="component" value="Chromosome"/>
</dbReference>
<dbReference type="GO" id="GO:0005829">
    <property type="term" value="C:cytosol"/>
    <property type="evidence" value="ECO:0007669"/>
    <property type="project" value="TreeGrafter"/>
</dbReference>
<dbReference type="GO" id="GO:0004477">
    <property type="term" value="F:methenyltetrahydrofolate cyclohydrolase activity"/>
    <property type="evidence" value="ECO:0007669"/>
    <property type="project" value="UniProtKB-UniRule"/>
</dbReference>
<dbReference type="GO" id="GO:0004488">
    <property type="term" value="F:methylenetetrahydrofolate dehydrogenase (NADP+) activity"/>
    <property type="evidence" value="ECO:0007669"/>
    <property type="project" value="UniProtKB-UniRule"/>
</dbReference>
<dbReference type="GO" id="GO:0000105">
    <property type="term" value="P:L-histidine biosynthetic process"/>
    <property type="evidence" value="ECO:0007669"/>
    <property type="project" value="UniProtKB-KW"/>
</dbReference>
<dbReference type="GO" id="GO:0009086">
    <property type="term" value="P:methionine biosynthetic process"/>
    <property type="evidence" value="ECO:0007669"/>
    <property type="project" value="UniProtKB-KW"/>
</dbReference>
<dbReference type="GO" id="GO:0006164">
    <property type="term" value="P:purine nucleotide biosynthetic process"/>
    <property type="evidence" value="ECO:0007669"/>
    <property type="project" value="UniProtKB-KW"/>
</dbReference>
<dbReference type="GO" id="GO:0035999">
    <property type="term" value="P:tetrahydrofolate interconversion"/>
    <property type="evidence" value="ECO:0007669"/>
    <property type="project" value="UniProtKB-UniRule"/>
</dbReference>
<dbReference type="CDD" id="cd01080">
    <property type="entry name" value="NAD_bind_m-THF_DH_Cyclohyd"/>
    <property type="match status" value="1"/>
</dbReference>
<dbReference type="FunFam" id="3.40.50.10860:FF:000001">
    <property type="entry name" value="Bifunctional protein FolD"/>
    <property type="match status" value="1"/>
</dbReference>
<dbReference type="FunFam" id="3.40.50.720:FF:000006">
    <property type="entry name" value="Bifunctional protein FolD"/>
    <property type="match status" value="1"/>
</dbReference>
<dbReference type="Gene3D" id="3.40.50.10860">
    <property type="entry name" value="Leucine Dehydrogenase, chain A, domain 1"/>
    <property type="match status" value="1"/>
</dbReference>
<dbReference type="Gene3D" id="3.40.50.720">
    <property type="entry name" value="NAD(P)-binding Rossmann-like Domain"/>
    <property type="match status" value="1"/>
</dbReference>
<dbReference type="HAMAP" id="MF_01576">
    <property type="entry name" value="THF_DHG_CYH"/>
    <property type="match status" value="1"/>
</dbReference>
<dbReference type="InterPro" id="IPR046346">
    <property type="entry name" value="Aminoacid_DH-like_N_sf"/>
</dbReference>
<dbReference type="InterPro" id="IPR036291">
    <property type="entry name" value="NAD(P)-bd_dom_sf"/>
</dbReference>
<dbReference type="InterPro" id="IPR000672">
    <property type="entry name" value="THF_DH/CycHdrlase"/>
</dbReference>
<dbReference type="InterPro" id="IPR020630">
    <property type="entry name" value="THF_DH/CycHdrlase_cat_dom"/>
</dbReference>
<dbReference type="InterPro" id="IPR020867">
    <property type="entry name" value="THF_DH/CycHdrlase_CS"/>
</dbReference>
<dbReference type="InterPro" id="IPR020631">
    <property type="entry name" value="THF_DH/CycHdrlase_NAD-bd_dom"/>
</dbReference>
<dbReference type="NCBIfam" id="NF008058">
    <property type="entry name" value="PRK10792.1"/>
    <property type="match status" value="1"/>
</dbReference>
<dbReference type="PANTHER" id="PTHR48099:SF5">
    <property type="entry name" value="C-1-TETRAHYDROFOLATE SYNTHASE, CYTOPLASMIC"/>
    <property type="match status" value="1"/>
</dbReference>
<dbReference type="PANTHER" id="PTHR48099">
    <property type="entry name" value="C-1-TETRAHYDROFOLATE SYNTHASE, CYTOPLASMIC-RELATED"/>
    <property type="match status" value="1"/>
</dbReference>
<dbReference type="Pfam" id="PF00763">
    <property type="entry name" value="THF_DHG_CYH"/>
    <property type="match status" value="1"/>
</dbReference>
<dbReference type="Pfam" id="PF02882">
    <property type="entry name" value="THF_DHG_CYH_C"/>
    <property type="match status" value="1"/>
</dbReference>
<dbReference type="PRINTS" id="PR00085">
    <property type="entry name" value="THFDHDRGNASE"/>
</dbReference>
<dbReference type="SUPFAM" id="SSF53223">
    <property type="entry name" value="Aminoacid dehydrogenase-like, N-terminal domain"/>
    <property type="match status" value="1"/>
</dbReference>
<dbReference type="SUPFAM" id="SSF51735">
    <property type="entry name" value="NAD(P)-binding Rossmann-fold domains"/>
    <property type="match status" value="1"/>
</dbReference>
<dbReference type="PROSITE" id="PS00766">
    <property type="entry name" value="THF_DHG_CYH_1"/>
    <property type="match status" value="1"/>
</dbReference>
<dbReference type="PROSITE" id="PS00767">
    <property type="entry name" value="THF_DHG_CYH_2"/>
    <property type="match status" value="1"/>
</dbReference>
<proteinExistence type="inferred from homology"/>
<reference key="1">
    <citation type="journal article" date="2004" name="Science">
        <title>The genomic sequence of the accidental pathogen Legionella pneumophila.</title>
        <authorList>
            <person name="Chien M."/>
            <person name="Morozova I."/>
            <person name="Shi S."/>
            <person name="Sheng H."/>
            <person name="Chen J."/>
            <person name="Gomez S.M."/>
            <person name="Asamani G."/>
            <person name="Hill K."/>
            <person name="Nuara J."/>
            <person name="Feder M."/>
            <person name="Rineer J."/>
            <person name="Greenberg J.J."/>
            <person name="Steshenko V."/>
            <person name="Park S.H."/>
            <person name="Zhao B."/>
            <person name="Teplitskaya E."/>
            <person name="Edwards J.R."/>
            <person name="Pampou S."/>
            <person name="Georghiou A."/>
            <person name="Chou I.-C."/>
            <person name="Iannuccilli W."/>
            <person name="Ulz M.E."/>
            <person name="Kim D.H."/>
            <person name="Geringer-Sameth A."/>
            <person name="Goldsberry C."/>
            <person name="Morozov P."/>
            <person name="Fischer S.G."/>
            <person name="Segal G."/>
            <person name="Qu X."/>
            <person name="Rzhetsky A."/>
            <person name="Zhang P."/>
            <person name="Cayanis E."/>
            <person name="De Jong P.J."/>
            <person name="Ju J."/>
            <person name="Kalachikov S."/>
            <person name="Shuman H.A."/>
            <person name="Russo J.J."/>
        </authorList>
    </citation>
    <scope>NUCLEOTIDE SEQUENCE [LARGE SCALE GENOMIC DNA]</scope>
    <source>
        <strain>Philadelphia 1 / ATCC 33152 / DSM 7513</strain>
    </source>
</reference>
<protein>
    <recommendedName>
        <fullName evidence="1">Bifunctional protein FolD</fullName>
    </recommendedName>
    <domain>
        <recommendedName>
            <fullName evidence="1">Methylenetetrahydrofolate dehydrogenase</fullName>
            <ecNumber evidence="1">1.5.1.5</ecNumber>
        </recommendedName>
    </domain>
    <domain>
        <recommendedName>
            <fullName evidence="1">Methenyltetrahydrofolate cyclohydrolase</fullName>
            <ecNumber evidence="1">3.5.4.9</ecNumber>
        </recommendedName>
    </domain>
</protein>
<accession>Q5ZVZ1</accession>
<sequence length="284" mass="31680">MPASLIDGREISALRRAELKQRVLYHVEQGQRAPGLAVVLIGNDPASVIYVSNKRKACEEVGITSHSYDLPAETTQEKLIELINELNQSDKIDGILIQLPLPKHINERTIIEYIKPEKDVDGFHPYNLGRLAQRNPFLRPCTPLGIMNLLHHYELNVKRKHAVVIGASNIVGRPMSLELLLAGATVTICHKFTQQLQKFVEIADFLIVATGKMDVIATDWLREHQVVIDVGMHRLPDGSIRGDIDFKKAVEKVAWITPVPGGVGPMTIVTLLENTMMSAARLRE</sequence>
<organism>
    <name type="scientific">Legionella pneumophila subsp. pneumophila (strain Philadelphia 1 / ATCC 33152 / DSM 7513)</name>
    <dbReference type="NCBI Taxonomy" id="272624"/>
    <lineage>
        <taxon>Bacteria</taxon>
        <taxon>Pseudomonadati</taxon>
        <taxon>Pseudomonadota</taxon>
        <taxon>Gammaproteobacteria</taxon>
        <taxon>Legionellales</taxon>
        <taxon>Legionellaceae</taxon>
        <taxon>Legionella</taxon>
    </lineage>
</organism>
<evidence type="ECO:0000255" key="1">
    <source>
        <dbReference type="HAMAP-Rule" id="MF_01576"/>
    </source>
</evidence>
<feature type="chain" id="PRO_0000268384" description="Bifunctional protein FolD">
    <location>
        <begin position="1"/>
        <end position="284"/>
    </location>
</feature>
<feature type="binding site" evidence="1">
    <location>
        <begin position="166"/>
        <end position="168"/>
    </location>
    <ligand>
        <name>NADP(+)</name>
        <dbReference type="ChEBI" id="CHEBI:58349"/>
    </ligand>
</feature>
<name>FOLD_LEGPH</name>
<keyword id="KW-0028">Amino-acid biosynthesis</keyword>
<keyword id="KW-0368">Histidine biosynthesis</keyword>
<keyword id="KW-0378">Hydrolase</keyword>
<keyword id="KW-0486">Methionine biosynthesis</keyword>
<keyword id="KW-0511">Multifunctional enzyme</keyword>
<keyword id="KW-0521">NADP</keyword>
<keyword id="KW-0554">One-carbon metabolism</keyword>
<keyword id="KW-0560">Oxidoreductase</keyword>
<keyword id="KW-0658">Purine biosynthesis</keyword>
<keyword id="KW-1185">Reference proteome</keyword>